<accession>Q06392</accession>
<dbReference type="EMBL" id="L07938">
    <property type="protein sequence ID" value="AAA48496.1"/>
    <property type="molecule type" value="Genomic_RNA"/>
</dbReference>
<dbReference type="RefSeq" id="NP_049340.1">
    <property type="nucleotide sequence ID" value="NC_002042.1"/>
</dbReference>
<dbReference type="SMR" id="Q06392"/>
<dbReference type="GeneID" id="991052"/>
<dbReference type="KEGG" id="vg:991052"/>
<dbReference type="Proteomes" id="UP000009270">
    <property type="component" value="Genome"/>
</dbReference>
<dbReference type="GO" id="GO:0052170">
    <property type="term" value="P:symbiont-mediated suppression of host innate immune response"/>
    <property type="evidence" value="ECO:0007669"/>
    <property type="project" value="UniProtKB-KW"/>
</dbReference>
<dbReference type="InterPro" id="IPR016567">
    <property type="entry name" value="Cys-rich_furovirus"/>
</dbReference>
<dbReference type="InterPro" id="IPR007609">
    <property type="entry name" value="Viral_P18"/>
</dbReference>
<dbReference type="Pfam" id="PF04521">
    <property type="entry name" value="Viral_P18"/>
    <property type="match status" value="1"/>
</dbReference>
<dbReference type="PIRSF" id="PIRSF010309">
    <property type="entry name" value="Cyc-rich_ssRNA"/>
    <property type="match status" value="1"/>
</dbReference>
<organism>
    <name type="scientific">Soil-borne wheat mosaic virus (strain United States/Nebraska/1981)</name>
    <name type="common">SBWMV</name>
    <dbReference type="NCBI Taxonomy" id="652673"/>
    <lineage>
        <taxon>Viruses</taxon>
        <taxon>Riboviria</taxon>
        <taxon>Orthornavirae</taxon>
        <taxon>Kitrinoviricota</taxon>
        <taxon>Alsuviricetes</taxon>
        <taxon>Martellivirales</taxon>
        <taxon>Virgaviridae</taxon>
        <taxon>Furovirus</taxon>
        <taxon>Soil-borne wheat mosaic virus</taxon>
    </lineage>
</organism>
<proteinExistence type="inferred from homology"/>
<reference key="1">
    <citation type="journal article" date="1993" name="Virology">
        <title>Complete nucleotide sequence and organization of the bipartite RNA genome of soil-borne wheat mosaic virus.</title>
        <authorList>
            <person name="Shirako Y."/>
            <person name="Wilson T.M."/>
        </authorList>
    </citation>
    <scope>NUCLEOTIDE SEQUENCE [GENOMIC RNA]</scope>
</reference>
<reference key="2">
    <citation type="journal article" date="2005" name="Virol. J.">
        <title>Soilborne wheat mosaic virus (SBWMV) 19K protein belongs to a class of cysteine rich proteins that suppress RNA silencing.</title>
        <authorList>
            <person name="Te J."/>
            <person name="Melcher U."/>
            <person name="Howard A."/>
            <person name="Verchot-Lubicz J."/>
        </authorList>
    </citation>
    <scope>FUNCTION</scope>
</reference>
<organismHost>
    <name type="scientific">Hordeum vulgare</name>
    <name type="common">Barley</name>
    <dbReference type="NCBI Taxonomy" id="4513"/>
</organismHost>
<organismHost>
    <name type="scientific">Triticum</name>
    <dbReference type="NCBI Taxonomy" id="4564"/>
</organismHost>
<comment type="function">
    <text evidence="2">Suppressor of RNA-mediated gene silencing, also known as post-transcriptional gene silencing (PTGS), a mechanism of plant viral defense that performs sequence-specific inhibition of viral mRNAs expression.</text>
</comment>
<comment type="similarity">
    <text evidence="3">Belongs to the virgaviridae suppressor of RNA silencing family.</text>
</comment>
<feature type="chain" id="PRO_0000409451" description="Suppressor of RNA silencing">
    <location>
        <begin position="1"/>
        <end position="174"/>
    </location>
</feature>
<feature type="coiled-coil region" evidence="1">
    <location>
        <begin position="86"/>
        <end position="116"/>
    </location>
</feature>
<keyword id="KW-0175">Coiled coil</keyword>
<keyword id="KW-0945">Host-virus interaction</keyword>
<keyword id="KW-1090">Inhibition of host innate immune response by virus</keyword>
<keyword id="KW-1185">Reference proteome</keyword>
<keyword id="KW-0941">Suppressor of RNA silencing</keyword>
<keyword id="KW-0899">Viral immunoevasion</keyword>
<name>VSR_SBWMN</name>
<protein>
    <recommendedName>
        <fullName>Suppressor of RNA silencing</fullName>
    </recommendedName>
    <alternativeName>
        <fullName>19kD cysteine rich protein</fullName>
        <shortName>P19</shortName>
    </alternativeName>
</protein>
<evidence type="ECO:0000255" key="1"/>
<evidence type="ECO:0000269" key="2">
    <source>
    </source>
</evidence>
<evidence type="ECO:0000305" key="3"/>
<sequence length="174" mass="18781">MSTVGFHTCASCVDGPKSIKCVSKYRISVYKTLGLDVVKCRLPADCGVNCGMPAAFVLEQGHPKLTMDGYCGEKHRGYVLSGAWRHAQLRSLNAELDTLEAREESLRAQIKALSAGDHCPAVLAYVPKKLTKLKAEVHDVTGKKQVCITGLVDVMDSALVRLAPDSPPKKISSL</sequence>